<keyword id="KW-1003">Cell membrane</keyword>
<keyword id="KW-0472">Membrane</keyword>
<keyword id="KW-1185">Reference proteome</keyword>
<keyword id="KW-0812">Transmembrane</keyword>
<keyword id="KW-1133">Transmembrane helix</keyword>
<keyword id="KW-0813">Transport</keyword>
<organism>
    <name type="scientific">Methanocaldococcus jannaschii (strain ATCC 43067 / DSM 2661 / JAL-1 / JCM 10045 / NBRC 100440)</name>
    <name type="common">Methanococcus jannaschii</name>
    <dbReference type="NCBI Taxonomy" id="243232"/>
    <lineage>
        <taxon>Archaea</taxon>
        <taxon>Methanobacteriati</taxon>
        <taxon>Methanobacteriota</taxon>
        <taxon>Methanomada group</taxon>
        <taxon>Methanococci</taxon>
        <taxon>Methanococcales</taxon>
        <taxon>Methanocaldococcaceae</taxon>
        <taxon>Methanocaldococcus</taxon>
    </lineage>
</organism>
<dbReference type="EMBL" id="L77117">
    <property type="protein sequence ID" value="AAB98567.1"/>
    <property type="molecule type" value="Genomic_DNA"/>
</dbReference>
<dbReference type="PIR" id="H64371">
    <property type="entry name" value="H64371"/>
</dbReference>
<dbReference type="RefSeq" id="WP_010870080.1">
    <property type="nucleotide sequence ID" value="NC_000909.1"/>
</dbReference>
<dbReference type="SMR" id="Q57996"/>
<dbReference type="STRING" id="243232.MJ_0576"/>
<dbReference type="PaxDb" id="243232-MJ_0576"/>
<dbReference type="EnsemblBacteria" id="AAB98567">
    <property type="protein sequence ID" value="AAB98567"/>
    <property type="gene ID" value="MJ_0576"/>
</dbReference>
<dbReference type="GeneID" id="1451441"/>
<dbReference type="KEGG" id="mja:MJ_0576"/>
<dbReference type="eggNOG" id="arCOG04355">
    <property type="taxonomic scope" value="Archaea"/>
</dbReference>
<dbReference type="HOGENOM" id="CLU_030057_6_4_2"/>
<dbReference type="InParanoid" id="Q57996"/>
<dbReference type="OrthoDB" id="184482at2157"/>
<dbReference type="PhylomeDB" id="Q57996"/>
<dbReference type="Proteomes" id="UP000000805">
    <property type="component" value="Chromosome"/>
</dbReference>
<dbReference type="GO" id="GO:0005886">
    <property type="term" value="C:plasma membrane"/>
    <property type="evidence" value="ECO:0000318"/>
    <property type="project" value="GO_Central"/>
</dbReference>
<dbReference type="GO" id="GO:0000319">
    <property type="term" value="F:sulfite transmembrane transporter activity"/>
    <property type="evidence" value="ECO:0000318"/>
    <property type="project" value="GO_Central"/>
</dbReference>
<dbReference type="GO" id="GO:0000316">
    <property type="term" value="P:sulfite transmembrane transport"/>
    <property type="evidence" value="ECO:0000318"/>
    <property type="project" value="GO_Central"/>
</dbReference>
<dbReference type="CDD" id="cd09321">
    <property type="entry name" value="TDT_like_3"/>
    <property type="match status" value="1"/>
</dbReference>
<dbReference type="FunFam" id="1.50.10.150:FF:000004">
    <property type="entry name" value="Malic acid transporter"/>
    <property type="match status" value="1"/>
</dbReference>
<dbReference type="Gene3D" id="1.50.10.150">
    <property type="entry name" value="Voltage-dependent anion channel"/>
    <property type="match status" value="1"/>
</dbReference>
<dbReference type="InterPro" id="IPR004695">
    <property type="entry name" value="SLAC1/Mae1/Ssu1/TehA"/>
</dbReference>
<dbReference type="InterPro" id="IPR051629">
    <property type="entry name" value="Sulfite_efflux_TDT"/>
</dbReference>
<dbReference type="InterPro" id="IPR011552">
    <property type="entry name" value="TehA/Mae1"/>
</dbReference>
<dbReference type="InterPro" id="IPR038665">
    <property type="entry name" value="Voltage-dep_anion_channel_sf"/>
</dbReference>
<dbReference type="NCBIfam" id="TIGR00816">
    <property type="entry name" value="tdt"/>
    <property type="match status" value="1"/>
</dbReference>
<dbReference type="PANTHER" id="PTHR31686">
    <property type="match status" value="1"/>
</dbReference>
<dbReference type="PANTHER" id="PTHR31686:SF1">
    <property type="entry name" value="SULFITE EFFLUX PUMP SSU1"/>
    <property type="match status" value="1"/>
</dbReference>
<dbReference type="Pfam" id="PF03595">
    <property type="entry name" value="SLAC1"/>
    <property type="match status" value="1"/>
</dbReference>
<reference key="1">
    <citation type="journal article" date="1996" name="Science">
        <title>Complete genome sequence of the methanogenic archaeon, Methanococcus jannaschii.</title>
        <authorList>
            <person name="Bult C.J."/>
            <person name="White O."/>
            <person name="Olsen G.J."/>
            <person name="Zhou L."/>
            <person name="Fleischmann R.D."/>
            <person name="Sutton G.G."/>
            <person name="Blake J.A."/>
            <person name="FitzGerald L.M."/>
            <person name="Clayton R.A."/>
            <person name="Gocayne J.D."/>
            <person name="Kerlavage A.R."/>
            <person name="Dougherty B.A."/>
            <person name="Tomb J.-F."/>
            <person name="Adams M.D."/>
            <person name="Reich C.I."/>
            <person name="Overbeek R."/>
            <person name="Kirkness E.F."/>
            <person name="Weinstock K.G."/>
            <person name="Merrick J.M."/>
            <person name="Glodek A."/>
            <person name="Scott J.L."/>
            <person name="Geoghagen N.S.M."/>
            <person name="Weidman J.F."/>
            <person name="Fuhrmann J.L."/>
            <person name="Nguyen D."/>
            <person name="Utterback T.R."/>
            <person name="Kelley J.M."/>
            <person name="Peterson J.D."/>
            <person name="Sadow P.W."/>
            <person name="Hanna M.C."/>
            <person name="Cotton M.D."/>
            <person name="Roberts K.M."/>
            <person name="Hurst M.A."/>
            <person name="Kaine B.P."/>
            <person name="Borodovsky M."/>
            <person name="Klenk H.-P."/>
            <person name="Fraser C.M."/>
            <person name="Smith H.O."/>
            <person name="Woese C.R."/>
            <person name="Venter J.C."/>
        </authorList>
    </citation>
    <scope>NUCLEOTIDE SEQUENCE [LARGE SCALE GENOMIC DNA]</scope>
    <source>
        <strain>ATCC 43067 / DSM 2661 / JAL-1 / JCM 10045 / NBRC 100440</strain>
    </source>
</reference>
<name>Y576_METJA</name>
<accession>Q57996</accession>
<gene>
    <name type="ordered locus">MJ0576</name>
</gene>
<feature type="chain" id="PRO_0000106939" description="Uncharacterized transporter MJ0576">
    <location>
        <begin position="1"/>
        <end position="347"/>
    </location>
</feature>
<feature type="transmembrane region" description="Helical" evidence="1">
    <location>
        <begin position="15"/>
        <end position="35"/>
    </location>
</feature>
<feature type="transmembrane region" description="Helical" evidence="1">
    <location>
        <begin position="46"/>
        <end position="66"/>
    </location>
</feature>
<feature type="transmembrane region" description="Helical" evidence="1">
    <location>
        <begin position="84"/>
        <end position="104"/>
    </location>
</feature>
<feature type="transmembrane region" description="Helical" evidence="1">
    <location>
        <begin position="111"/>
        <end position="131"/>
    </location>
</feature>
<feature type="transmembrane region" description="Helical" evidence="1">
    <location>
        <begin position="149"/>
        <end position="169"/>
    </location>
</feature>
<feature type="transmembrane region" description="Helical" evidence="1">
    <location>
        <begin position="182"/>
        <end position="202"/>
    </location>
</feature>
<feature type="transmembrane region" description="Helical" evidence="1">
    <location>
        <begin position="214"/>
        <end position="234"/>
    </location>
</feature>
<feature type="transmembrane region" description="Helical" evidence="1">
    <location>
        <begin position="249"/>
        <end position="269"/>
    </location>
</feature>
<feature type="transmembrane region" description="Helical" evidence="1">
    <location>
        <begin position="283"/>
        <end position="303"/>
    </location>
</feature>
<feature type="transmembrane region" description="Helical" evidence="1">
    <location>
        <begin position="312"/>
        <end position="332"/>
    </location>
</feature>
<sequence length="347" mass="39557">MLEACESKLDIIKNFVPSWFAAVMGTGILAVDSLLYSSYLPILKDVAVGLFYFNVLLFFIFLVPWVLRWIMFKDNALADLKHPVLSAFYPTIAVSCLVLGADFINIGHNMFWGGVFWTLGAIGMFLFSLIVPFYMFKSESIKLDHVNPGWYIPPVGLIVIPIAGSLIMPHLTGVWHELTVLINYFGWGAGFFLYLALLAVVIYRFILHHPLPSAMAPTVWINLGPIGAGIVALINMVNNSPFITIKEPFYIFSFIFWGFGLWWSLMAIIMTLYYVKKLKLPYAMSWWAFIFPLGAYVASSHLVYKIFKFSIIDYIGFGLYWLLFFFWAITLIKTTNKVYTGEVFKGH</sequence>
<evidence type="ECO:0000255" key="1"/>
<evidence type="ECO:0000305" key="2"/>
<protein>
    <recommendedName>
        <fullName>Uncharacterized transporter MJ0576</fullName>
    </recommendedName>
</protein>
<comment type="subcellular location">
    <subcellularLocation>
        <location evidence="2">Cell membrane</location>
        <topology evidence="2">Multi-pass membrane protein</topology>
    </subcellularLocation>
</comment>
<comment type="similarity">
    <text evidence="2">Belongs to the tellurite-resistance/dicarboxylate transporter (TDT) family.</text>
</comment>
<proteinExistence type="inferred from homology"/>